<sequence length="333" mass="36725">MRNTRYGFLVLLSSLLMLTGCSRRDILDDYPVSGVDIKLDWDGVTDQLPEGVRVIFYPKNGDGRKVDKYLSVRGGEMKVPPGRYSVVVYNYNTESIRIRGEESYETIEAYTGNCNGLGIEGTEKMVWSPDSLYVLNIDELKIEKSEEVLRLDWKLESVVKKYSFAVEAKGLEYVATVVGSIDGLSDCYCIGKGRGVCSSQPIYFEVKKGDNKVTAFFTAFKQVKEMTMPTRMSTSERETSSEKGAIILILKFIKTDNTVQEATIDVTEIIGTLENAGTGEDGKPTPPPEIELPPDDKIEVDKPETPPNPDGGGGMGGNVDGWGPEDNVELPVN</sequence>
<proteinExistence type="evidence at protein level"/>
<gene>
    <name evidence="6" type="ORF">BACOVA_02677</name>
</gene>
<dbReference type="EMBL" id="AAXF02000049">
    <property type="protein sequence ID" value="EDO11468.1"/>
    <property type="status" value="ALT_INIT"/>
    <property type="molecule type" value="Genomic_DNA"/>
</dbReference>
<dbReference type="PDB" id="5CAG">
    <property type="method" value="X-ray"/>
    <property type="resolution" value="3.00 A"/>
    <property type="chains" value="A=17-333"/>
</dbReference>
<dbReference type="PDBsum" id="5CAG"/>
<dbReference type="SMR" id="A7LXW1"/>
<dbReference type="eggNOG" id="ENOG5033TA6">
    <property type="taxonomic scope" value="Bacteria"/>
</dbReference>
<dbReference type="HOGENOM" id="CLU_068434_1_0_10"/>
<dbReference type="EvolutionaryTrace" id="A7LXW1"/>
<dbReference type="Proteomes" id="UP000005475">
    <property type="component" value="Unassembled WGS sequence"/>
</dbReference>
<dbReference type="GO" id="GO:0009279">
    <property type="term" value="C:cell outer membrane"/>
    <property type="evidence" value="ECO:0007669"/>
    <property type="project" value="UniProtKB-SubCell"/>
</dbReference>
<dbReference type="InterPro" id="IPR033410">
    <property type="entry name" value="DUF5119"/>
</dbReference>
<dbReference type="Pfam" id="PF17145">
    <property type="entry name" value="DUF5119"/>
    <property type="match status" value="1"/>
</dbReference>
<dbReference type="PROSITE" id="PS51257">
    <property type="entry name" value="PROKAR_LIPOPROTEIN"/>
    <property type="match status" value="1"/>
</dbReference>
<comment type="function">
    <text evidence="5">Putative fimbrium anchoring subunit.</text>
</comment>
<comment type="subcellular location">
    <subcellularLocation>
        <location evidence="5">Cell outer membrane</location>
        <topology evidence="5">Lipid-anchor</topology>
    </subcellularLocation>
</comment>
<comment type="similarity">
    <text evidence="4">Belongs to the bacteroidetes fimbrillin superfamily. FimB/Mfa2 family.</text>
</comment>
<comment type="sequence caution" evidence="4">
    <conflict type="erroneous initiation">
        <sequence resource="EMBL-CDS" id="EDO11468"/>
    </conflict>
    <text>Truncated N-terminus.</text>
</comment>
<feature type="signal peptide" evidence="1">
    <location>
        <begin position="1"/>
        <end position="20"/>
    </location>
</feature>
<feature type="chain" id="PRO_0000436786" description="Putative fimbrium anchoring subunit Fim4B">
    <location>
        <begin position="21"/>
        <end position="333"/>
    </location>
</feature>
<feature type="region of interest" description="Disordered" evidence="2">
    <location>
        <begin position="274"/>
        <end position="333"/>
    </location>
</feature>
<feature type="compositionally biased region" description="Basic and acidic residues" evidence="2">
    <location>
        <begin position="294"/>
        <end position="304"/>
    </location>
</feature>
<feature type="compositionally biased region" description="Gly residues" evidence="2">
    <location>
        <begin position="310"/>
        <end position="320"/>
    </location>
</feature>
<feature type="lipid moiety-binding region" description="N-palmitoyl cysteine" evidence="1">
    <location>
        <position position="21"/>
    </location>
</feature>
<feature type="lipid moiety-binding region" description="S-diacylglycerol cysteine" evidence="1">
    <location>
        <position position="21"/>
    </location>
</feature>
<feature type="strand" evidence="7">
    <location>
        <begin position="27"/>
        <end position="30"/>
    </location>
</feature>
<feature type="strand" evidence="7">
    <location>
        <begin position="35"/>
        <end position="40"/>
    </location>
</feature>
<feature type="turn" evidence="7">
    <location>
        <begin position="42"/>
        <end position="44"/>
    </location>
</feature>
<feature type="strand" evidence="7">
    <location>
        <begin position="50"/>
        <end position="63"/>
    </location>
</feature>
<feature type="strand" evidence="7">
    <location>
        <begin position="66"/>
        <end position="71"/>
    </location>
</feature>
<feature type="strand" evidence="7">
    <location>
        <begin position="74"/>
        <end position="77"/>
    </location>
</feature>
<feature type="strand" evidence="7">
    <location>
        <begin position="81"/>
        <end position="90"/>
    </location>
</feature>
<feature type="strand" evidence="7">
    <location>
        <begin position="94"/>
        <end position="99"/>
    </location>
</feature>
<feature type="helix" evidence="7">
    <location>
        <begin position="104"/>
        <end position="106"/>
    </location>
</feature>
<feature type="strand" evidence="7">
    <location>
        <begin position="108"/>
        <end position="111"/>
    </location>
</feature>
<feature type="helix" evidence="7">
    <location>
        <begin position="122"/>
        <end position="124"/>
    </location>
</feature>
<feature type="strand" evidence="7">
    <location>
        <begin position="133"/>
        <end position="142"/>
    </location>
</feature>
<feature type="strand" evidence="7">
    <location>
        <begin position="149"/>
        <end position="154"/>
    </location>
</feature>
<feature type="strand" evidence="7">
    <location>
        <begin position="159"/>
        <end position="169"/>
    </location>
</feature>
<feature type="helix" evidence="7">
    <location>
        <begin position="171"/>
        <end position="173"/>
    </location>
</feature>
<feature type="strand" evidence="7">
    <location>
        <begin position="174"/>
        <end position="185"/>
    </location>
</feature>
<feature type="strand" evidence="7">
    <location>
        <begin position="187"/>
        <end position="189"/>
    </location>
</feature>
<feature type="turn" evidence="7">
    <location>
        <begin position="190"/>
        <end position="193"/>
    </location>
</feature>
<feature type="strand" evidence="7">
    <location>
        <begin position="194"/>
        <end position="196"/>
    </location>
</feature>
<feature type="strand" evidence="7">
    <location>
        <begin position="202"/>
        <end position="208"/>
    </location>
</feature>
<feature type="strand" evidence="7">
    <location>
        <begin position="210"/>
        <end position="220"/>
    </location>
</feature>
<feature type="strand" evidence="7">
    <location>
        <begin position="241"/>
        <end position="244"/>
    </location>
</feature>
<feature type="strand" evidence="7">
    <location>
        <begin position="247"/>
        <end position="254"/>
    </location>
</feature>
<feature type="strand" evidence="7">
    <location>
        <begin position="259"/>
        <end position="265"/>
    </location>
</feature>
<feature type="helix" evidence="7">
    <location>
        <begin position="267"/>
        <end position="269"/>
    </location>
</feature>
<feature type="helix" evidence="7">
    <location>
        <begin position="270"/>
        <end position="273"/>
    </location>
</feature>
<feature type="helix" evidence="7">
    <location>
        <begin position="294"/>
        <end position="296"/>
    </location>
</feature>
<name>FIMB_BACO1</name>
<protein>
    <recommendedName>
        <fullName>Putative fimbrium anchoring subunit Fim4B</fullName>
    </recommendedName>
</protein>
<keyword id="KW-0002">3D-structure</keyword>
<keyword id="KW-0998">Cell outer membrane</keyword>
<keyword id="KW-0449">Lipoprotein</keyword>
<keyword id="KW-0472">Membrane</keyword>
<keyword id="KW-0564">Palmitate</keyword>
<keyword id="KW-0732">Signal</keyword>
<accession>A7LXW1</accession>
<evidence type="ECO:0000255" key="1">
    <source>
        <dbReference type="PROSITE-ProRule" id="PRU00303"/>
    </source>
</evidence>
<evidence type="ECO:0000256" key="2">
    <source>
        <dbReference type="SAM" id="MobiDB-lite"/>
    </source>
</evidence>
<evidence type="ECO:0000303" key="3">
    <source>
    </source>
</evidence>
<evidence type="ECO:0000305" key="4"/>
<evidence type="ECO:0000305" key="5">
    <source>
    </source>
</evidence>
<evidence type="ECO:0000312" key="6">
    <source>
        <dbReference type="EMBL" id="EDO11468.1"/>
    </source>
</evidence>
<evidence type="ECO:0007829" key="7">
    <source>
        <dbReference type="PDB" id="5CAG"/>
    </source>
</evidence>
<organism evidence="6">
    <name type="scientific">Bacteroides ovatus (strain ATCC 8483 / DSM 1896 / JCM 5824 / BCRC 10623 / CCUG 4943 / NCTC 11153)</name>
    <dbReference type="NCBI Taxonomy" id="411476"/>
    <lineage>
        <taxon>Bacteria</taxon>
        <taxon>Pseudomonadati</taxon>
        <taxon>Bacteroidota</taxon>
        <taxon>Bacteroidia</taxon>
        <taxon>Bacteroidales</taxon>
        <taxon>Bacteroidaceae</taxon>
        <taxon>Bacteroides</taxon>
    </lineage>
</organism>
<reference evidence="6" key="1">
    <citation type="submission" date="2007-04" db="EMBL/GenBank/DDBJ databases">
        <title>Draft genome sequence of Bacteroides ovatus (ATCC 8483).</title>
        <authorList>
            <person name="Sudarsanam P."/>
            <person name="Ley R."/>
            <person name="Guruge J."/>
            <person name="Turnbaugh P.J."/>
            <person name="Mahowald M."/>
            <person name="Liep D."/>
            <person name="Gordon J."/>
        </authorList>
    </citation>
    <scope>NUCLEOTIDE SEQUENCE [LARGE SCALE GENOMIC DNA]</scope>
    <source>
        <strain>ATCC 8483 / DSM 1896 / JCM 5824 / BCRC 10623 / CCUG 4943 / NCTC 11153</strain>
    </source>
</reference>
<reference key="2">
    <citation type="journal article" date="2016" name="Cell">
        <title>A distinct type of pilus from the human microbiome.</title>
        <authorList>
            <person name="Xu Q."/>
            <person name="Shoji M."/>
            <person name="Shibata S."/>
            <person name="Naito M."/>
            <person name="Sato K."/>
            <person name="Elsliger M.A."/>
            <person name="Grant J.C."/>
            <person name="Axelrod H.L."/>
            <person name="Chiu H.J."/>
            <person name="Farr C.L."/>
            <person name="Jaroszewski L."/>
            <person name="Knuth M.W."/>
            <person name="Deacon A.M."/>
            <person name="Godzik A."/>
            <person name="Lesley S.A."/>
            <person name="Curtis M.A."/>
            <person name="Nakayama K."/>
            <person name="Wilson I.A."/>
        </authorList>
    </citation>
    <scope>X-RAY CRYSTALLOGRAPHY (3.00 ANGSTROMS)</scope>
    <scope>FUNCTION</scope>
    <scope>SUBCELLULAR LOCATION</scope>
    <source>
        <strain evidence="3">ATCC 8483 / DSM 1896 / JCM 5824 / BCRC 10623 / CCUG 4943 / NCTC 11153</strain>
    </source>
</reference>